<protein>
    <recommendedName>
        <fullName evidence="1">Large ribosomal subunit protein bL9</fullName>
    </recommendedName>
    <alternativeName>
        <fullName evidence="2">50S ribosomal protein L9</fullName>
    </alternativeName>
</protein>
<gene>
    <name evidence="1" type="primary">rplI</name>
    <name type="ordered locus">Dtpsy_2566</name>
</gene>
<reference key="1">
    <citation type="submission" date="2009-01" db="EMBL/GenBank/DDBJ databases">
        <title>Complete sequence of Diaphorobacter sp. TPSY.</title>
        <authorList>
            <consortium name="US DOE Joint Genome Institute"/>
            <person name="Lucas S."/>
            <person name="Copeland A."/>
            <person name="Lapidus A."/>
            <person name="Glavina del Rio T."/>
            <person name="Tice H."/>
            <person name="Bruce D."/>
            <person name="Goodwin L."/>
            <person name="Pitluck S."/>
            <person name="Chertkov O."/>
            <person name="Brettin T."/>
            <person name="Detter J.C."/>
            <person name="Han C."/>
            <person name="Larimer F."/>
            <person name="Land M."/>
            <person name="Hauser L."/>
            <person name="Kyrpides N."/>
            <person name="Mikhailova N."/>
            <person name="Coates J.D."/>
        </authorList>
    </citation>
    <scope>NUCLEOTIDE SEQUENCE [LARGE SCALE GENOMIC DNA]</scope>
    <source>
        <strain>TPSY</strain>
    </source>
</reference>
<sequence>MQIILLDKVVNLGNLGEIVKVKDGYARNFLIPTGRARRATEAAKAEFEAKRAELEKAAAEKLAAAQAQGEKLAGTTVKLTQKAGVDGRLFGSVTNHDIAEELNKQGYNVVKSQVRLPNGPIKVVGDNTVTVALHTDVAVEVTVSVYGETA</sequence>
<evidence type="ECO:0000255" key="1">
    <source>
        <dbReference type="HAMAP-Rule" id="MF_00503"/>
    </source>
</evidence>
<evidence type="ECO:0000305" key="2"/>
<name>RL9_ACIET</name>
<accession>B9MDJ2</accession>
<keyword id="KW-1185">Reference proteome</keyword>
<keyword id="KW-0687">Ribonucleoprotein</keyword>
<keyword id="KW-0689">Ribosomal protein</keyword>
<keyword id="KW-0694">RNA-binding</keyword>
<keyword id="KW-0699">rRNA-binding</keyword>
<comment type="function">
    <text evidence="1">Binds to the 23S rRNA.</text>
</comment>
<comment type="similarity">
    <text evidence="1">Belongs to the bacterial ribosomal protein bL9 family.</text>
</comment>
<proteinExistence type="inferred from homology"/>
<dbReference type="EMBL" id="CP001392">
    <property type="protein sequence ID" value="ACM34001.1"/>
    <property type="molecule type" value="Genomic_DNA"/>
</dbReference>
<dbReference type="RefSeq" id="WP_011806334.1">
    <property type="nucleotide sequence ID" value="NC_011992.1"/>
</dbReference>
<dbReference type="SMR" id="B9MDJ2"/>
<dbReference type="GeneID" id="84680683"/>
<dbReference type="KEGG" id="dia:Dtpsy_2566"/>
<dbReference type="eggNOG" id="COG0359">
    <property type="taxonomic scope" value="Bacteria"/>
</dbReference>
<dbReference type="HOGENOM" id="CLU_078938_4_1_4"/>
<dbReference type="Proteomes" id="UP000000450">
    <property type="component" value="Chromosome"/>
</dbReference>
<dbReference type="GO" id="GO:1990904">
    <property type="term" value="C:ribonucleoprotein complex"/>
    <property type="evidence" value="ECO:0007669"/>
    <property type="project" value="UniProtKB-KW"/>
</dbReference>
<dbReference type="GO" id="GO:0005840">
    <property type="term" value="C:ribosome"/>
    <property type="evidence" value="ECO:0007669"/>
    <property type="project" value="UniProtKB-KW"/>
</dbReference>
<dbReference type="GO" id="GO:0019843">
    <property type="term" value="F:rRNA binding"/>
    <property type="evidence" value="ECO:0007669"/>
    <property type="project" value="UniProtKB-UniRule"/>
</dbReference>
<dbReference type="GO" id="GO:0003735">
    <property type="term" value="F:structural constituent of ribosome"/>
    <property type="evidence" value="ECO:0007669"/>
    <property type="project" value="InterPro"/>
</dbReference>
<dbReference type="GO" id="GO:0006412">
    <property type="term" value="P:translation"/>
    <property type="evidence" value="ECO:0007669"/>
    <property type="project" value="UniProtKB-UniRule"/>
</dbReference>
<dbReference type="Gene3D" id="3.10.430.100">
    <property type="entry name" value="Ribosomal protein L9, C-terminal domain"/>
    <property type="match status" value="1"/>
</dbReference>
<dbReference type="Gene3D" id="3.40.5.10">
    <property type="entry name" value="Ribosomal protein L9, N-terminal domain"/>
    <property type="match status" value="1"/>
</dbReference>
<dbReference type="HAMAP" id="MF_00503">
    <property type="entry name" value="Ribosomal_bL9"/>
    <property type="match status" value="1"/>
</dbReference>
<dbReference type="InterPro" id="IPR000244">
    <property type="entry name" value="Ribosomal_bL9"/>
</dbReference>
<dbReference type="InterPro" id="IPR009027">
    <property type="entry name" value="Ribosomal_bL9/RNase_H1_N"/>
</dbReference>
<dbReference type="InterPro" id="IPR020594">
    <property type="entry name" value="Ribosomal_bL9_bac/chp"/>
</dbReference>
<dbReference type="InterPro" id="IPR020069">
    <property type="entry name" value="Ribosomal_bL9_C"/>
</dbReference>
<dbReference type="InterPro" id="IPR036791">
    <property type="entry name" value="Ribosomal_bL9_C_sf"/>
</dbReference>
<dbReference type="InterPro" id="IPR020070">
    <property type="entry name" value="Ribosomal_bL9_N"/>
</dbReference>
<dbReference type="InterPro" id="IPR036935">
    <property type="entry name" value="Ribosomal_bL9_N_sf"/>
</dbReference>
<dbReference type="NCBIfam" id="TIGR00158">
    <property type="entry name" value="L9"/>
    <property type="match status" value="1"/>
</dbReference>
<dbReference type="PANTHER" id="PTHR21368">
    <property type="entry name" value="50S RIBOSOMAL PROTEIN L9"/>
    <property type="match status" value="1"/>
</dbReference>
<dbReference type="Pfam" id="PF03948">
    <property type="entry name" value="Ribosomal_L9_C"/>
    <property type="match status" value="1"/>
</dbReference>
<dbReference type="Pfam" id="PF01281">
    <property type="entry name" value="Ribosomal_L9_N"/>
    <property type="match status" value="1"/>
</dbReference>
<dbReference type="SUPFAM" id="SSF55658">
    <property type="entry name" value="L9 N-domain-like"/>
    <property type="match status" value="1"/>
</dbReference>
<dbReference type="SUPFAM" id="SSF55653">
    <property type="entry name" value="Ribosomal protein L9 C-domain"/>
    <property type="match status" value="1"/>
</dbReference>
<dbReference type="PROSITE" id="PS00651">
    <property type="entry name" value="RIBOSOMAL_L9"/>
    <property type="match status" value="1"/>
</dbReference>
<feature type="chain" id="PRO_1000196242" description="Large ribosomal subunit protein bL9">
    <location>
        <begin position="1"/>
        <end position="150"/>
    </location>
</feature>
<organism>
    <name type="scientific">Acidovorax ebreus (strain TPSY)</name>
    <name type="common">Diaphorobacter sp. (strain TPSY)</name>
    <dbReference type="NCBI Taxonomy" id="535289"/>
    <lineage>
        <taxon>Bacteria</taxon>
        <taxon>Pseudomonadati</taxon>
        <taxon>Pseudomonadota</taxon>
        <taxon>Betaproteobacteria</taxon>
        <taxon>Burkholderiales</taxon>
        <taxon>Comamonadaceae</taxon>
        <taxon>Diaphorobacter</taxon>
    </lineage>
</organism>